<proteinExistence type="predicted"/>
<accession>Q09465</accession>
<protein>
    <recommendedName>
        <fullName>Uncharacterized protein C16C10.9</fullName>
    </recommendedName>
</protein>
<dbReference type="EMBL" id="Z46787">
    <property type="protein sequence ID" value="CAA86747.1"/>
    <property type="molecule type" value="Genomic_DNA"/>
</dbReference>
<dbReference type="PIR" id="T19330">
    <property type="entry name" value="T19330"/>
</dbReference>
<dbReference type="RefSeq" id="NP_497828.1">
    <property type="nucleotide sequence ID" value="NM_065427.3"/>
</dbReference>
<dbReference type="FunCoup" id="Q09465">
    <property type="interactions" value="178"/>
</dbReference>
<dbReference type="PaxDb" id="6239-C16C10.9"/>
<dbReference type="EnsemblMetazoa" id="C16C10.9.1">
    <property type="protein sequence ID" value="C16C10.9.1"/>
    <property type="gene ID" value="WBGene00007629"/>
</dbReference>
<dbReference type="GeneID" id="182682"/>
<dbReference type="KEGG" id="cel:CELE_C16C10.9"/>
<dbReference type="UCSC" id="C16C10.9">
    <property type="organism name" value="c. elegans"/>
</dbReference>
<dbReference type="AGR" id="WB:WBGene00007629"/>
<dbReference type="CTD" id="182682"/>
<dbReference type="WormBase" id="C16C10.9">
    <property type="protein sequence ID" value="CE01500"/>
    <property type="gene ID" value="WBGene00007629"/>
</dbReference>
<dbReference type="eggNOG" id="ENOG502TJ22">
    <property type="taxonomic scope" value="Eukaryota"/>
</dbReference>
<dbReference type="HOGENOM" id="CLU_1016475_0_0_1"/>
<dbReference type="InParanoid" id="Q09465"/>
<dbReference type="OMA" id="RMSIDIQ"/>
<dbReference type="OrthoDB" id="10660788at2759"/>
<dbReference type="PRO" id="PR:Q09465"/>
<dbReference type="Proteomes" id="UP000001940">
    <property type="component" value="Chromosome III"/>
</dbReference>
<dbReference type="Bgee" id="WBGene00007629">
    <property type="expression patterns" value="Expressed in pharyngeal muscle cell (C elegans) and 3 other cell types or tissues"/>
</dbReference>
<sequence>MSDDEIVCILDTRNNQKEKDRQITREVNNLIIEQENTQNRVIAPSPQLMVAIRQSVEQRQEYIRRMSIDIQRMLIPYGEDVYLISDMMLLKEEVVQHIDFQFLKNKVVPPPPVFYSSTIYFLYKQATCQRMGPIYLQQLGNVVTLRIKENYPAIKTISDYPSLKSIIEFYSRFEMGNGPDFFVKKEESQRQFEVVLGEAFQYINLFHKKHGTPPAPPQFLIKFCILMHQLGFQEWTAESFDVIVVDRLRRNLRNIDQRFFDSIRDAFGIYLKRF</sequence>
<organism>
    <name type="scientific">Caenorhabditis elegans</name>
    <dbReference type="NCBI Taxonomy" id="6239"/>
    <lineage>
        <taxon>Eukaryota</taxon>
        <taxon>Metazoa</taxon>
        <taxon>Ecdysozoa</taxon>
        <taxon>Nematoda</taxon>
        <taxon>Chromadorea</taxon>
        <taxon>Rhabditida</taxon>
        <taxon>Rhabditina</taxon>
        <taxon>Rhabditomorpha</taxon>
        <taxon>Rhabditoidea</taxon>
        <taxon>Rhabditidae</taxon>
        <taxon>Peloderinae</taxon>
        <taxon>Caenorhabditis</taxon>
    </lineage>
</organism>
<feature type="chain" id="PRO_0000065183" description="Uncharacterized protein C16C10.9">
    <location>
        <begin position="1"/>
        <end position="274"/>
    </location>
</feature>
<gene>
    <name type="ORF">C16C10.9</name>
</gene>
<keyword id="KW-1185">Reference proteome</keyword>
<reference key="1">
    <citation type="journal article" date="1998" name="Science">
        <title>Genome sequence of the nematode C. elegans: a platform for investigating biology.</title>
        <authorList>
            <consortium name="The C. elegans sequencing consortium"/>
        </authorList>
    </citation>
    <scope>NUCLEOTIDE SEQUENCE [LARGE SCALE GENOMIC DNA]</scope>
    <source>
        <strain>Bristol N2</strain>
    </source>
</reference>
<name>YQ59_CAEEL</name>